<comment type="function">
    <text evidence="1">Catalyzes the NADPH-dependent reduction of glutamyl-tRNA(Glu) to glutamate 1-semialdehyde (GSA).</text>
</comment>
<comment type="catalytic activity">
    <reaction evidence="1">
        <text>(S)-4-amino-5-oxopentanoate + tRNA(Glu) + NADP(+) = L-glutamyl-tRNA(Glu) + NADPH + H(+)</text>
        <dbReference type="Rhea" id="RHEA:12344"/>
        <dbReference type="Rhea" id="RHEA-COMP:9663"/>
        <dbReference type="Rhea" id="RHEA-COMP:9680"/>
        <dbReference type="ChEBI" id="CHEBI:15378"/>
        <dbReference type="ChEBI" id="CHEBI:57501"/>
        <dbReference type="ChEBI" id="CHEBI:57783"/>
        <dbReference type="ChEBI" id="CHEBI:58349"/>
        <dbReference type="ChEBI" id="CHEBI:78442"/>
        <dbReference type="ChEBI" id="CHEBI:78520"/>
        <dbReference type="EC" id="1.2.1.70"/>
    </reaction>
</comment>
<comment type="pathway">
    <text evidence="1">Porphyrin-containing compound metabolism; protoporphyrin-IX biosynthesis; 5-aminolevulinate from L-glutamyl-tRNA(Glu): step 1/2.</text>
</comment>
<comment type="subunit">
    <text evidence="1">Homodimer.</text>
</comment>
<comment type="domain">
    <text evidence="1">Possesses an unusual extended V-shaped dimeric structure with each monomer consisting of three distinct domains arranged along a curved 'spinal' alpha-helix. The N-terminal catalytic domain specifically recognizes the glutamate moiety of the substrate. The second domain is the NADPH-binding domain, and the third C-terminal domain is responsible for dimerization.</text>
</comment>
<comment type="miscellaneous">
    <text evidence="1">During catalysis, the active site Cys acts as a nucleophile attacking the alpha-carbonyl group of tRNA-bound glutamate with the formation of a thioester intermediate between enzyme and glutamate, and the concomitant release of tRNA(Glu). The thioester intermediate is finally reduced by direct hydride transfer from NADPH, to form the product GSA.</text>
</comment>
<comment type="similarity">
    <text evidence="1">Belongs to the glutamyl-tRNA reductase family.</text>
</comment>
<feature type="chain" id="PRO_1000004624" description="Glutamyl-tRNA reductase">
    <location>
        <begin position="1"/>
        <end position="414"/>
    </location>
</feature>
<feature type="active site" description="Nucleophile" evidence="1">
    <location>
        <position position="50"/>
    </location>
</feature>
<feature type="binding site" evidence="1">
    <location>
        <begin position="49"/>
        <end position="52"/>
    </location>
    <ligand>
        <name>substrate</name>
    </ligand>
</feature>
<feature type="binding site" evidence="1">
    <location>
        <position position="108"/>
    </location>
    <ligand>
        <name>substrate</name>
    </ligand>
</feature>
<feature type="binding site" evidence="1">
    <location>
        <begin position="113"/>
        <end position="115"/>
    </location>
    <ligand>
        <name>substrate</name>
    </ligand>
</feature>
<feature type="binding site" evidence="1">
    <location>
        <position position="119"/>
    </location>
    <ligand>
        <name>substrate</name>
    </ligand>
</feature>
<feature type="binding site" evidence="1">
    <location>
        <begin position="188"/>
        <end position="193"/>
    </location>
    <ligand>
        <name>NADP(+)</name>
        <dbReference type="ChEBI" id="CHEBI:58349"/>
    </ligand>
</feature>
<feature type="site" description="Important for activity" evidence="1">
    <location>
        <position position="98"/>
    </location>
</feature>
<proteinExistence type="inferred from homology"/>
<dbReference type="EC" id="1.2.1.70" evidence="1"/>
<dbReference type="EMBL" id="CP000608">
    <property type="protein sequence ID" value="ABO46222.1"/>
    <property type="molecule type" value="Genomic_DNA"/>
</dbReference>
<dbReference type="RefSeq" id="WP_003024858.1">
    <property type="nucleotide sequence ID" value="NC_009257.1"/>
</dbReference>
<dbReference type="SMR" id="A4IWC0"/>
<dbReference type="KEGG" id="ftw:FTW_0258"/>
<dbReference type="HOGENOM" id="CLU_035113_1_0_6"/>
<dbReference type="UniPathway" id="UPA00251">
    <property type="reaction ID" value="UER00316"/>
</dbReference>
<dbReference type="GO" id="GO:0008883">
    <property type="term" value="F:glutamyl-tRNA reductase activity"/>
    <property type="evidence" value="ECO:0007669"/>
    <property type="project" value="UniProtKB-UniRule"/>
</dbReference>
<dbReference type="GO" id="GO:0050661">
    <property type="term" value="F:NADP binding"/>
    <property type="evidence" value="ECO:0007669"/>
    <property type="project" value="InterPro"/>
</dbReference>
<dbReference type="GO" id="GO:0019353">
    <property type="term" value="P:protoporphyrinogen IX biosynthetic process from glutamate"/>
    <property type="evidence" value="ECO:0007669"/>
    <property type="project" value="TreeGrafter"/>
</dbReference>
<dbReference type="CDD" id="cd05213">
    <property type="entry name" value="NAD_bind_Glutamyl_tRNA_reduct"/>
    <property type="match status" value="1"/>
</dbReference>
<dbReference type="FunFam" id="3.30.460.30:FF:000001">
    <property type="entry name" value="Glutamyl-tRNA reductase"/>
    <property type="match status" value="1"/>
</dbReference>
<dbReference type="Gene3D" id="3.30.460.30">
    <property type="entry name" value="Glutamyl-tRNA reductase, N-terminal domain"/>
    <property type="match status" value="1"/>
</dbReference>
<dbReference type="Gene3D" id="3.40.50.720">
    <property type="entry name" value="NAD(P)-binding Rossmann-like Domain"/>
    <property type="match status" value="1"/>
</dbReference>
<dbReference type="HAMAP" id="MF_00087">
    <property type="entry name" value="Glu_tRNA_reductase"/>
    <property type="match status" value="1"/>
</dbReference>
<dbReference type="InterPro" id="IPR000343">
    <property type="entry name" value="4pyrrol_synth_GluRdtase"/>
</dbReference>
<dbReference type="InterPro" id="IPR015896">
    <property type="entry name" value="4pyrrol_synth_GluRdtase_dimer"/>
</dbReference>
<dbReference type="InterPro" id="IPR015895">
    <property type="entry name" value="4pyrrol_synth_GluRdtase_N"/>
</dbReference>
<dbReference type="InterPro" id="IPR018214">
    <property type="entry name" value="GluRdtase_CS"/>
</dbReference>
<dbReference type="InterPro" id="IPR036453">
    <property type="entry name" value="GluRdtase_dimer_dom_sf"/>
</dbReference>
<dbReference type="InterPro" id="IPR036343">
    <property type="entry name" value="GluRdtase_N_sf"/>
</dbReference>
<dbReference type="InterPro" id="IPR036291">
    <property type="entry name" value="NAD(P)-bd_dom_sf"/>
</dbReference>
<dbReference type="InterPro" id="IPR006151">
    <property type="entry name" value="Shikm_DH/Glu-tRNA_Rdtase"/>
</dbReference>
<dbReference type="NCBIfam" id="TIGR01035">
    <property type="entry name" value="hemA"/>
    <property type="match status" value="1"/>
</dbReference>
<dbReference type="NCBIfam" id="NF010548">
    <property type="entry name" value="PRK13940.1"/>
    <property type="match status" value="1"/>
</dbReference>
<dbReference type="PANTHER" id="PTHR43013">
    <property type="entry name" value="GLUTAMYL-TRNA REDUCTASE"/>
    <property type="match status" value="1"/>
</dbReference>
<dbReference type="PANTHER" id="PTHR43013:SF1">
    <property type="entry name" value="GLUTAMYL-TRNA REDUCTASE"/>
    <property type="match status" value="1"/>
</dbReference>
<dbReference type="Pfam" id="PF00745">
    <property type="entry name" value="GlutR_dimer"/>
    <property type="match status" value="1"/>
</dbReference>
<dbReference type="Pfam" id="PF05201">
    <property type="entry name" value="GlutR_N"/>
    <property type="match status" value="1"/>
</dbReference>
<dbReference type="Pfam" id="PF01488">
    <property type="entry name" value="Shikimate_DH"/>
    <property type="match status" value="1"/>
</dbReference>
<dbReference type="PIRSF" id="PIRSF000445">
    <property type="entry name" value="4pyrrol_synth_GluRdtase"/>
    <property type="match status" value="1"/>
</dbReference>
<dbReference type="SUPFAM" id="SSF69742">
    <property type="entry name" value="Glutamyl tRNA-reductase catalytic, N-terminal domain"/>
    <property type="match status" value="1"/>
</dbReference>
<dbReference type="SUPFAM" id="SSF69075">
    <property type="entry name" value="Glutamyl tRNA-reductase dimerization domain"/>
    <property type="match status" value="1"/>
</dbReference>
<dbReference type="SUPFAM" id="SSF51735">
    <property type="entry name" value="NAD(P)-binding Rossmann-fold domains"/>
    <property type="match status" value="1"/>
</dbReference>
<dbReference type="PROSITE" id="PS00747">
    <property type="entry name" value="GLUTR"/>
    <property type="match status" value="1"/>
</dbReference>
<accession>A4IWC0</accession>
<gene>
    <name evidence="1" type="primary">hemA</name>
    <name type="ordered locus">FTW_0258</name>
</gene>
<evidence type="ECO:0000255" key="1">
    <source>
        <dbReference type="HAMAP-Rule" id="MF_00087"/>
    </source>
</evidence>
<keyword id="KW-0521">NADP</keyword>
<keyword id="KW-0560">Oxidoreductase</keyword>
<keyword id="KW-0627">Porphyrin biosynthesis</keyword>
<sequence>MALISLAIDYKKSPIEVRSEFALSGLDVSMLYRSILAIDNVVHAVILSTCNRTEVYLEISDLRVVDDILVWWQGYVRNPNYKIKDYFKLRQGTEVIMHLMKLACGLESMVLGEPQILGQVKDSYTLSKKNHAIGKELDRVFQKVFATAKRVRSETRIGHCPVSVAFSAITLAKRQLDNISSKNVLIIGAGQTGELLFRHVTALAPKQIMLANRTIEKAQKITSAFRNASAHYLSELPQLIKKADIIIAAVNVLEYIVTCKYVGDKPRVFIDISIPQALDPKLGELEQNVYYCVDDINAVIEDNKDKRKYESSKAQKIIVKSLEEYLEKEKAIISNSAIKELFQKADGLVDLSLEKSLAKIRNGKDAEEIIKRFAYEIKKKVLHYPVVGMKEASKQGRSDCLVCMKRMFGLNVEK</sequence>
<protein>
    <recommendedName>
        <fullName evidence="1">Glutamyl-tRNA reductase</fullName>
        <shortName evidence="1">GluTR</shortName>
        <ecNumber evidence="1">1.2.1.70</ecNumber>
    </recommendedName>
</protein>
<name>HEM1_FRATW</name>
<reference key="1">
    <citation type="journal article" date="2007" name="PLoS ONE">
        <title>Complete genomic characterization of a pathogenic A.II strain of Francisella tularensis subspecies tularensis.</title>
        <authorList>
            <person name="Beckstrom-Sternberg S.M."/>
            <person name="Auerbach R.K."/>
            <person name="Godbole S."/>
            <person name="Pearson J.V."/>
            <person name="Beckstrom-Sternberg J.S."/>
            <person name="Deng Z."/>
            <person name="Munk C."/>
            <person name="Kubota K."/>
            <person name="Zhou Y."/>
            <person name="Bruce D."/>
            <person name="Noronha J."/>
            <person name="Scheuermann R.H."/>
            <person name="Wang A."/>
            <person name="Wei X."/>
            <person name="Wang J."/>
            <person name="Hao J."/>
            <person name="Wagner D.M."/>
            <person name="Brettin T.S."/>
            <person name="Brown N."/>
            <person name="Gilna P."/>
            <person name="Keim P.S."/>
        </authorList>
    </citation>
    <scope>NUCLEOTIDE SEQUENCE [LARGE SCALE GENOMIC DNA]</scope>
    <source>
        <strain>WY96-3418</strain>
    </source>
</reference>
<organism>
    <name type="scientific">Francisella tularensis subsp. tularensis (strain WY96-3418)</name>
    <dbReference type="NCBI Taxonomy" id="418136"/>
    <lineage>
        <taxon>Bacteria</taxon>
        <taxon>Pseudomonadati</taxon>
        <taxon>Pseudomonadota</taxon>
        <taxon>Gammaproteobacteria</taxon>
        <taxon>Thiotrichales</taxon>
        <taxon>Francisellaceae</taxon>
        <taxon>Francisella</taxon>
    </lineage>
</organism>